<gene>
    <name evidence="1" type="primary">pfkA</name>
    <name type="ordered locus">YpsIP31758_0089</name>
</gene>
<reference key="1">
    <citation type="journal article" date="2007" name="PLoS Genet.">
        <title>The complete genome sequence of Yersinia pseudotuberculosis IP31758, the causative agent of Far East scarlet-like fever.</title>
        <authorList>
            <person name="Eppinger M."/>
            <person name="Rosovitz M.J."/>
            <person name="Fricke W.F."/>
            <person name="Rasko D.A."/>
            <person name="Kokorina G."/>
            <person name="Fayolle C."/>
            <person name="Lindler L.E."/>
            <person name="Carniel E."/>
            <person name="Ravel J."/>
        </authorList>
    </citation>
    <scope>NUCLEOTIDE SEQUENCE [LARGE SCALE GENOMIC DNA]</scope>
    <source>
        <strain>IP 31758</strain>
    </source>
</reference>
<feature type="chain" id="PRO_1000059811" description="ATP-dependent 6-phosphofructokinase">
    <location>
        <begin position="1"/>
        <end position="327"/>
    </location>
</feature>
<feature type="active site" description="Proton acceptor" evidence="1">
    <location>
        <position position="129"/>
    </location>
</feature>
<feature type="binding site" evidence="1">
    <location>
        <position position="12"/>
    </location>
    <ligand>
        <name>ATP</name>
        <dbReference type="ChEBI" id="CHEBI:30616"/>
    </ligand>
</feature>
<feature type="binding site" evidence="1">
    <location>
        <begin position="22"/>
        <end position="26"/>
    </location>
    <ligand>
        <name>ADP</name>
        <dbReference type="ChEBI" id="CHEBI:456216"/>
        <note>allosteric activator; ligand shared between dimeric partners</note>
    </ligand>
</feature>
<feature type="binding site" evidence="1">
    <location>
        <begin position="55"/>
        <end position="60"/>
    </location>
    <ligand>
        <name>ADP</name>
        <dbReference type="ChEBI" id="CHEBI:456216"/>
        <note>allosteric activator; ligand shared between dimeric partners</note>
    </ligand>
</feature>
<feature type="binding site" evidence="1">
    <location>
        <begin position="73"/>
        <end position="74"/>
    </location>
    <ligand>
        <name>ATP</name>
        <dbReference type="ChEBI" id="CHEBI:30616"/>
    </ligand>
</feature>
<feature type="binding site" evidence="1">
    <location>
        <begin position="103"/>
        <end position="106"/>
    </location>
    <ligand>
        <name>ATP</name>
        <dbReference type="ChEBI" id="CHEBI:30616"/>
    </ligand>
</feature>
<feature type="binding site" evidence="1">
    <location>
        <position position="104"/>
    </location>
    <ligand>
        <name>Mg(2+)</name>
        <dbReference type="ChEBI" id="CHEBI:18420"/>
        <note>catalytic</note>
    </ligand>
</feature>
<feature type="binding site" description="in other chain" evidence="1">
    <location>
        <begin position="127"/>
        <end position="129"/>
    </location>
    <ligand>
        <name>substrate</name>
        <note>ligand shared between dimeric partners</note>
    </ligand>
</feature>
<feature type="binding site" description="in other chain" evidence="1">
    <location>
        <position position="156"/>
    </location>
    <ligand>
        <name>ADP</name>
        <dbReference type="ChEBI" id="CHEBI:456216"/>
        <note>allosteric activator; ligand shared between dimeric partners</note>
    </ligand>
</feature>
<feature type="binding site" evidence="1">
    <location>
        <position position="164"/>
    </location>
    <ligand>
        <name>substrate</name>
        <note>ligand shared between dimeric partners</note>
    </ligand>
</feature>
<feature type="binding site" description="in other chain" evidence="1">
    <location>
        <begin position="171"/>
        <end position="173"/>
    </location>
    <ligand>
        <name>substrate</name>
        <note>ligand shared between dimeric partners</note>
    </ligand>
</feature>
<feature type="binding site" description="in other chain" evidence="1">
    <location>
        <begin position="187"/>
        <end position="189"/>
    </location>
    <ligand>
        <name>ADP</name>
        <dbReference type="ChEBI" id="CHEBI:456216"/>
        <note>allosteric activator; ligand shared between dimeric partners</note>
    </ligand>
</feature>
<feature type="binding site" description="in other chain" evidence="1">
    <location>
        <position position="213"/>
    </location>
    <ligand>
        <name>ADP</name>
        <dbReference type="ChEBI" id="CHEBI:456216"/>
        <note>allosteric activator; ligand shared between dimeric partners</note>
    </ligand>
</feature>
<feature type="binding site" description="in other chain" evidence="1">
    <location>
        <begin position="215"/>
        <end position="217"/>
    </location>
    <ligand>
        <name>ADP</name>
        <dbReference type="ChEBI" id="CHEBI:456216"/>
        <note>allosteric activator; ligand shared between dimeric partners</note>
    </ligand>
</feature>
<feature type="binding site" description="in other chain" evidence="1">
    <location>
        <position position="224"/>
    </location>
    <ligand>
        <name>substrate</name>
        <note>ligand shared between dimeric partners</note>
    </ligand>
</feature>
<feature type="binding site" evidence="1">
    <location>
        <position position="245"/>
    </location>
    <ligand>
        <name>substrate</name>
        <note>ligand shared between dimeric partners</note>
    </ligand>
</feature>
<feature type="binding site" description="in other chain" evidence="1">
    <location>
        <begin position="251"/>
        <end position="254"/>
    </location>
    <ligand>
        <name>substrate</name>
        <note>ligand shared between dimeric partners</note>
    </ligand>
</feature>
<organism>
    <name type="scientific">Yersinia pseudotuberculosis serotype O:1b (strain IP 31758)</name>
    <dbReference type="NCBI Taxonomy" id="349747"/>
    <lineage>
        <taxon>Bacteria</taxon>
        <taxon>Pseudomonadati</taxon>
        <taxon>Pseudomonadota</taxon>
        <taxon>Gammaproteobacteria</taxon>
        <taxon>Enterobacterales</taxon>
        <taxon>Yersiniaceae</taxon>
        <taxon>Yersinia</taxon>
    </lineage>
</organism>
<name>PFKA_YERP3</name>
<accession>A7FCW1</accession>
<protein>
    <recommendedName>
        <fullName evidence="1">ATP-dependent 6-phosphofructokinase</fullName>
        <shortName evidence="1">ATP-PFK</shortName>
        <shortName evidence="1">Phosphofructokinase</shortName>
        <ecNumber evidence="1">2.7.1.11</ecNumber>
    </recommendedName>
    <alternativeName>
        <fullName evidence="1">Phosphohexokinase</fullName>
    </alternativeName>
</protein>
<keyword id="KW-0021">Allosteric enzyme</keyword>
<keyword id="KW-0067">ATP-binding</keyword>
<keyword id="KW-0963">Cytoplasm</keyword>
<keyword id="KW-0324">Glycolysis</keyword>
<keyword id="KW-0418">Kinase</keyword>
<keyword id="KW-0460">Magnesium</keyword>
<keyword id="KW-0479">Metal-binding</keyword>
<keyword id="KW-0547">Nucleotide-binding</keyword>
<keyword id="KW-0808">Transferase</keyword>
<evidence type="ECO:0000255" key="1">
    <source>
        <dbReference type="HAMAP-Rule" id="MF_00339"/>
    </source>
</evidence>
<proteinExistence type="inferred from homology"/>
<comment type="function">
    <text evidence="1">Catalyzes the phosphorylation of D-fructose 6-phosphate to fructose 1,6-bisphosphate by ATP, the first committing step of glycolysis.</text>
</comment>
<comment type="catalytic activity">
    <reaction evidence="1">
        <text>beta-D-fructose 6-phosphate + ATP = beta-D-fructose 1,6-bisphosphate + ADP + H(+)</text>
        <dbReference type="Rhea" id="RHEA:16109"/>
        <dbReference type="ChEBI" id="CHEBI:15378"/>
        <dbReference type="ChEBI" id="CHEBI:30616"/>
        <dbReference type="ChEBI" id="CHEBI:32966"/>
        <dbReference type="ChEBI" id="CHEBI:57634"/>
        <dbReference type="ChEBI" id="CHEBI:456216"/>
        <dbReference type="EC" id="2.7.1.11"/>
    </reaction>
</comment>
<comment type="cofactor">
    <cofactor evidence="1">
        <name>Mg(2+)</name>
        <dbReference type="ChEBI" id="CHEBI:18420"/>
    </cofactor>
</comment>
<comment type="activity regulation">
    <text evidence="1">Allosterically activated by ADP and other diphosphonucleosides, and allosterically inhibited by phosphoenolpyruvate.</text>
</comment>
<comment type="pathway">
    <text evidence="1">Carbohydrate degradation; glycolysis; D-glyceraldehyde 3-phosphate and glycerone phosphate from D-glucose: step 3/4.</text>
</comment>
<comment type="subunit">
    <text evidence="1">Homotetramer.</text>
</comment>
<comment type="subcellular location">
    <subcellularLocation>
        <location evidence="1">Cytoplasm</location>
    </subcellularLocation>
</comment>
<comment type="similarity">
    <text evidence="1">Belongs to the phosphofructokinase type A (PFKA) family. ATP-dependent PFK group I subfamily. Prokaryotic clade 'B1' sub-subfamily.</text>
</comment>
<dbReference type="EC" id="2.7.1.11" evidence="1"/>
<dbReference type="EMBL" id="CP000720">
    <property type="protein sequence ID" value="ABS47085.1"/>
    <property type="molecule type" value="Genomic_DNA"/>
</dbReference>
<dbReference type="RefSeq" id="WP_002208966.1">
    <property type="nucleotide sequence ID" value="NC_009708.1"/>
</dbReference>
<dbReference type="SMR" id="A7FCW1"/>
<dbReference type="GeneID" id="57974514"/>
<dbReference type="KEGG" id="ypi:YpsIP31758_0089"/>
<dbReference type="HOGENOM" id="CLU_020655_0_1_6"/>
<dbReference type="UniPathway" id="UPA00109">
    <property type="reaction ID" value="UER00182"/>
</dbReference>
<dbReference type="Proteomes" id="UP000002412">
    <property type="component" value="Chromosome"/>
</dbReference>
<dbReference type="GO" id="GO:0005945">
    <property type="term" value="C:6-phosphofructokinase complex"/>
    <property type="evidence" value="ECO:0007669"/>
    <property type="project" value="TreeGrafter"/>
</dbReference>
<dbReference type="GO" id="GO:0003872">
    <property type="term" value="F:6-phosphofructokinase activity"/>
    <property type="evidence" value="ECO:0007669"/>
    <property type="project" value="UniProtKB-UniRule"/>
</dbReference>
<dbReference type="GO" id="GO:0016208">
    <property type="term" value="F:AMP binding"/>
    <property type="evidence" value="ECO:0007669"/>
    <property type="project" value="TreeGrafter"/>
</dbReference>
<dbReference type="GO" id="GO:0005524">
    <property type="term" value="F:ATP binding"/>
    <property type="evidence" value="ECO:0007669"/>
    <property type="project" value="UniProtKB-KW"/>
</dbReference>
<dbReference type="GO" id="GO:0070095">
    <property type="term" value="F:fructose-6-phosphate binding"/>
    <property type="evidence" value="ECO:0007669"/>
    <property type="project" value="TreeGrafter"/>
</dbReference>
<dbReference type="GO" id="GO:0042802">
    <property type="term" value="F:identical protein binding"/>
    <property type="evidence" value="ECO:0007669"/>
    <property type="project" value="TreeGrafter"/>
</dbReference>
<dbReference type="GO" id="GO:0046872">
    <property type="term" value="F:metal ion binding"/>
    <property type="evidence" value="ECO:0007669"/>
    <property type="project" value="UniProtKB-KW"/>
</dbReference>
<dbReference type="GO" id="GO:0048029">
    <property type="term" value="F:monosaccharide binding"/>
    <property type="evidence" value="ECO:0007669"/>
    <property type="project" value="TreeGrafter"/>
</dbReference>
<dbReference type="GO" id="GO:0061621">
    <property type="term" value="P:canonical glycolysis"/>
    <property type="evidence" value="ECO:0007669"/>
    <property type="project" value="TreeGrafter"/>
</dbReference>
<dbReference type="GO" id="GO:0030388">
    <property type="term" value="P:fructose 1,6-bisphosphate metabolic process"/>
    <property type="evidence" value="ECO:0007669"/>
    <property type="project" value="TreeGrafter"/>
</dbReference>
<dbReference type="GO" id="GO:0006002">
    <property type="term" value="P:fructose 6-phosphate metabolic process"/>
    <property type="evidence" value="ECO:0007669"/>
    <property type="project" value="InterPro"/>
</dbReference>
<dbReference type="FunFam" id="3.40.50.450:FF:000001">
    <property type="entry name" value="ATP-dependent 6-phosphofructokinase"/>
    <property type="match status" value="1"/>
</dbReference>
<dbReference type="FunFam" id="3.40.50.460:FF:000002">
    <property type="entry name" value="ATP-dependent 6-phosphofructokinase"/>
    <property type="match status" value="1"/>
</dbReference>
<dbReference type="Gene3D" id="3.40.50.450">
    <property type="match status" value="1"/>
</dbReference>
<dbReference type="Gene3D" id="3.40.50.460">
    <property type="entry name" value="Phosphofructokinase domain"/>
    <property type="match status" value="1"/>
</dbReference>
<dbReference type="HAMAP" id="MF_00339">
    <property type="entry name" value="Phosphofructokinase_I_B1"/>
    <property type="match status" value="1"/>
</dbReference>
<dbReference type="InterPro" id="IPR022953">
    <property type="entry name" value="ATP_PFK"/>
</dbReference>
<dbReference type="InterPro" id="IPR012003">
    <property type="entry name" value="ATP_PFK_prok-type"/>
</dbReference>
<dbReference type="InterPro" id="IPR012828">
    <property type="entry name" value="PFKA_ATP_prok"/>
</dbReference>
<dbReference type="InterPro" id="IPR015912">
    <property type="entry name" value="Phosphofructokinase_CS"/>
</dbReference>
<dbReference type="InterPro" id="IPR000023">
    <property type="entry name" value="Phosphofructokinase_dom"/>
</dbReference>
<dbReference type="InterPro" id="IPR035966">
    <property type="entry name" value="PKF_sf"/>
</dbReference>
<dbReference type="NCBIfam" id="TIGR02482">
    <property type="entry name" value="PFKA_ATP"/>
    <property type="match status" value="1"/>
</dbReference>
<dbReference type="NCBIfam" id="NF002872">
    <property type="entry name" value="PRK03202.1"/>
    <property type="match status" value="1"/>
</dbReference>
<dbReference type="PANTHER" id="PTHR13697:SF4">
    <property type="entry name" value="ATP-DEPENDENT 6-PHOSPHOFRUCTOKINASE"/>
    <property type="match status" value="1"/>
</dbReference>
<dbReference type="PANTHER" id="PTHR13697">
    <property type="entry name" value="PHOSPHOFRUCTOKINASE"/>
    <property type="match status" value="1"/>
</dbReference>
<dbReference type="Pfam" id="PF00365">
    <property type="entry name" value="PFK"/>
    <property type="match status" value="1"/>
</dbReference>
<dbReference type="PIRSF" id="PIRSF000532">
    <property type="entry name" value="ATP_PFK_prok"/>
    <property type="match status" value="1"/>
</dbReference>
<dbReference type="PRINTS" id="PR00476">
    <property type="entry name" value="PHFRCTKINASE"/>
</dbReference>
<dbReference type="SUPFAM" id="SSF53784">
    <property type="entry name" value="Phosphofructokinase"/>
    <property type="match status" value="1"/>
</dbReference>
<dbReference type="PROSITE" id="PS00433">
    <property type="entry name" value="PHOSPHOFRUCTOKINASE"/>
    <property type="match status" value="1"/>
</dbReference>
<sequence>MVKKIGVLTSGGDAPGMNAAIRGVVRAALSAGLDVFGIEDGYLGLYENRMKKLDRYSVSDMINRGGTFLGSARFPEFRDPEVRKVALKNMHERGIDGLVVIGGDGSYAGADLLTKEGGIHCVGLPGTIDNDVAGTDYTIGFFTALETVVEAIDRLRDTSSSHQRISIVEVMGRYCGDLTLAAAIAGGCEFIAIPEVEFKRDDLVAEIKAGIAKGKKHAIVAITEKLDDIDSLAKYIEKETGRETRGTVLGHIQRGGAPVAYDRILASRMGAYAVDLLLQDHDYKKGGFCVGVQNEKMVHELISVCIAPENKKSKFKEDWYDTAKKLF</sequence>